<keyword id="KW-0012">Acyltransferase</keyword>
<keyword id="KW-0963">Cytoplasm</keyword>
<keyword id="KW-0275">Fatty acid biosynthesis</keyword>
<keyword id="KW-0276">Fatty acid metabolism</keyword>
<keyword id="KW-0444">Lipid biosynthesis</keyword>
<keyword id="KW-0443">Lipid metabolism</keyword>
<keyword id="KW-0511">Multifunctional enzyme</keyword>
<keyword id="KW-1185">Reference proteome</keyword>
<keyword id="KW-0808">Transferase</keyword>
<comment type="function">
    <text evidence="2">Essential enzyme that catalyzes the condensation reaction of fatty acid synthesis by the addition to an acyl acceptor of two carbons from malonyl-ACP. Catalyzes the first condensation reaction which initiates fatty acid synthesis and may therefore play a role in governing the total rate of fatty acid production. Possesses both acetoacetyl-ACP synthase and acetyl transacylase activities. Its substrate specificity determines the biosynthesis of branched-chain of fatty acids.</text>
</comment>
<comment type="catalytic activity">
    <reaction evidence="1">
        <text>malonyl-[ACP] + acetyl-CoA + H(+) = 3-oxobutanoyl-[ACP] + CO2 + CoA</text>
        <dbReference type="Rhea" id="RHEA:12080"/>
        <dbReference type="Rhea" id="RHEA-COMP:9623"/>
        <dbReference type="Rhea" id="RHEA-COMP:9625"/>
        <dbReference type="ChEBI" id="CHEBI:15378"/>
        <dbReference type="ChEBI" id="CHEBI:16526"/>
        <dbReference type="ChEBI" id="CHEBI:57287"/>
        <dbReference type="ChEBI" id="CHEBI:57288"/>
        <dbReference type="ChEBI" id="CHEBI:78449"/>
        <dbReference type="ChEBI" id="CHEBI:78450"/>
        <dbReference type="EC" id="2.3.1.180"/>
    </reaction>
</comment>
<comment type="pathway">
    <text evidence="1">Lipid metabolism; fatty acid biosynthesis.</text>
</comment>
<comment type="subunit">
    <text evidence="1">Homodimer.</text>
</comment>
<comment type="subcellular location">
    <subcellularLocation>
        <location evidence="1">Cytoplasm</location>
    </subcellularLocation>
</comment>
<comment type="domain">
    <text evidence="1">The last Arg residue of the ACP-binding site is essential for the weak association between ACP/AcpP and FabH.</text>
</comment>
<comment type="similarity">
    <text evidence="1">Belongs to the thiolase-like superfamily. FabH family.</text>
</comment>
<dbReference type="EC" id="2.3.1.180" evidence="1"/>
<dbReference type="EMBL" id="X86475">
    <property type="protein sequence ID" value="CAA60200.1"/>
    <property type="molecule type" value="Genomic_DNA"/>
</dbReference>
<dbReference type="EMBL" id="AL939112">
    <property type="protein sequence ID" value="CAB62720.1"/>
    <property type="molecule type" value="Genomic_DNA"/>
</dbReference>
<dbReference type="RefSeq" id="NP_626634.1">
    <property type="nucleotide sequence ID" value="NC_003888.3"/>
</dbReference>
<dbReference type="RefSeq" id="WP_003976418.1">
    <property type="nucleotide sequence ID" value="NZ_VNID01000001.1"/>
</dbReference>
<dbReference type="SMR" id="P72392"/>
<dbReference type="FunCoup" id="P72392">
    <property type="interactions" value="223"/>
</dbReference>
<dbReference type="STRING" id="100226.gene:17759987"/>
<dbReference type="PaxDb" id="100226-SCO2388"/>
<dbReference type="KEGG" id="sco:SCO2388"/>
<dbReference type="PATRIC" id="fig|100226.15.peg.2429"/>
<dbReference type="eggNOG" id="COG0332">
    <property type="taxonomic scope" value="Bacteria"/>
</dbReference>
<dbReference type="HOGENOM" id="CLU_039592_4_0_11"/>
<dbReference type="InParanoid" id="P72392"/>
<dbReference type="OrthoDB" id="9815506at2"/>
<dbReference type="PhylomeDB" id="P72392"/>
<dbReference type="BRENDA" id="2.3.1.180">
    <property type="organism ID" value="5998"/>
</dbReference>
<dbReference type="UniPathway" id="UPA00094"/>
<dbReference type="Proteomes" id="UP000001973">
    <property type="component" value="Chromosome"/>
</dbReference>
<dbReference type="GO" id="GO:0005737">
    <property type="term" value="C:cytoplasm"/>
    <property type="evidence" value="ECO:0007669"/>
    <property type="project" value="UniProtKB-SubCell"/>
</dbReference>
<dbReference type="GO" id="GO:0004315">
    <property type="term" value="F:3-oxoacyl-[acyl-carrier-protein] synthase activity"/>
    <property type="evidence" value="ECO:0007669"/>
    <property type="project" value="InterPro"/>
</dbReference>
<dbReference type="GO" id="GO:0033818">
    <property type="term" value="F:beta-ketoacyl-acyl-carrier-protein synthase III activity"/>
    <property type="evidence" value="ECO:0007669"/>
    <property type="project" value="UniProtKB-UniRule"/>
</dbReference>
<dbReference type="GO" id="GO:0006633">
    <property type="term" value="P:fatty acid biosynthetic process"/>
    <property type="evidence" value="ECO:0007669"/>
    <property type="project" value="UniProtKB-UniRule"/>
</dbReference>
<dbReference type="CDD" id="cd00830">
    <property type="entry name" value="KAS_III"/>
    <property type="match status" value="1"/>
</dbReference>
<dbReference type="Gene3D" id="3.40.47.10">
    <property type="match status" value="2"/>
</dbReference>
<dbReference type="HAMAP" id="MF_01815">
    <property type="entry name" value="FabH"/>
    <property type="match status" value="1"/>
</dbReference>
<dbReference type="InterPro" id="IPR013747">
    <property type="entry name" value="ACP_syn_III_C"/>
</dbReference>
<dbReference type="InterPro" id="IPR013751">
    <property type="entry name" value="ACP_syn_III_N"/>
</dbReference>
<dbReference type="InterPro" id="IPR004655">
    <property type="entry name" value="FabH"/>
</dbReference>
<dbReference type="InterPro" id="IPR016039">
    <property type="entry name" value="Thiolase-like"/>
</dbReference>
<dbReference type="NCBIfam" id="TIGR00747">
    <property type="entry name" value="fabH"/>
    <property type="match status" value="1"/>
</dbReference>
<dbReference type="NCBIfam" id="NF006829">
    <property type="entry name" value="PRK09352.1"/>
    <property type="match status" value="1"/>
</dbReference>
<dbReference type="PANTHER" id="PTHR34069">
    <property type="entry name" value="3-OXOACYL-[ACYL-CARRIER-PROTEIN] SYNTHASE 3"/>
    <property type="match status" value="1"/>
</dbReference>
<dbReference type="PANTHER" id="PTHR34069:SF2">
    <property type="entry name" value="BETA-KETOACYL-[ACYL-CARRIER-PROTEIN] SYNTHASE III"/>
    <property type="match status" value="1"/>
</dbReference>
<dbReference type="Pfam" id="PF08545">
    <property type="entry name" value="ACP_syn_III"/>
    <property type="match status" value="1"/>
</dbReference>
<dbReference type="Pfam" id="PF08541">
    <property type="entry name" value="ACP_syn_III_C"/>
    <property type="match status" value="1"/>
</dbReference>
<dbReference type="SUPFAM" id="SSF53901">
    <property type="entry name" value="Thiolase-like"/>
    <property type="match status" value="1"/>
</dbReference>
<proteinExistence type="inferred from homology"/>
<protein>
    <recommendedName>
        <fullName evidence="1">Beta-ketoacyl-[acyl-carrier-protein] synthase III 1</fullName>
        <shortName evidence="1">Beta-ketoacyl-ACP synthase III 1</shortName>
        <shortName evidence="1">KAS III 1</shortName>
        <ecNumber evidence="1">2.3.1.180</ecNumber>
    </recommendedName>
    <alternativeName>
        <fullName evidence="1">3-oxoacyl-[acyl-carrier-protein] synthase 3 1</fullName>
    </alternativeName>
    <alternativeName>
        <fullName evidence="1">3-oxoacyl-[acyl-carrier-protein] synthase III 1</fullName>
    </alternativeName>
</protein>
<gene>
    <name evidence="1" type="primary">fabH1</name>
    <name type="ordered locus">SCO2388</name>
    <name type="ORF">SC4A7.16</name>
</gene>
<evidence type="ECO:0000255" key="1">
    <source>
        <dbReference type="HAMAP-Rule" id="MF_01815"/>
    </source>
</evidence>
<evidence type="ECO:0000269" key="2">
    <source>
    </source>
</evidence>
<accession>P72392</accession>
<sequence length="343" mass="35982">MSKIKPSKGAPYARILGVGGYRPTRVVPNEVILEKIDSSDEWIRSRSGIETRHWAGPEETVAAMSVEASGKALADAGIDASRIGAVVVSTVSHFSQTPAIATEIADRLGTDKAAAFDISAGCAGFGYGLTLAKGMVVEGSAEYVLVIGVERLSDLTDLEDRATAFLFGDGAGAVVVGPSQEPAIGPTVWGSEGDKAETIKQTVSWDRFRIGDVSELPLDSEGNVKFPAITQEGQAVFRWAVFEMAKVAQQALDAAGISPDDLDVFIPHQANVRIIDSMVKTLKLPEHVTVARDIRTTGNTSAASIPLAMERLLATGDARSGDTALVIGFGAGLVYAATVVTLP</sequence>
<feature type="chain" id="PRO_0000110483" description="Beta-ketoacyl-[acyl-carrier-protein] synthase III 1">
    <location>
        <begin position="1"/>
        <end position="343"/>
    </location>
</feature>
<feature type="region of interest" description="ACP-binding" evidence="1">
    <location>
        <begin position="269"/>
        <end position="273"/>
    </location>
</feature>
<feature type="active site" evidence="1">
    <location>
        <position position="122"/>
    </location>
</feature>
<feature type="active site" evidence="1">
    <location>
        <position position="268"/>
    </location>
</feature>
<feature type="active site" evidence="1">
    <location>
        <position position="299"/>
    </location>
</feature>
<name>FABH1_STRCO</name>
<reference key="1">
    <citation type="journal article" date="1995" name="J. Bacteriol.">
        <title>Purification of a malonyltransferase from Streptomyces coelicolor A3(2) and analysis of its genetic determinant.</title>
        <authorList>
            <person name="Revill W.P."/>
            <person name="Bibb M.J."/>
            <person name="Hopwood D.A."/>
        </authorList>
    </citation>
    <scope>NUCLEOTIDE SEQUENCE [GENOMIC DNA]</scope>
    <source>
        <strain>A3(2) / NRRL B-16638</strain>
    </source>
</reference>
<reference key="2">
    <citation type="journal article" date="2002" name="Nature">
        <title>Complete genome sequence of the model actinomycete Streptomyces coelicolor A3(2).</title>
        <authorList>
            <person name="Bentley S.D."/>
            <person name="Chater K.F."/>
            <person name="Cerdeno-Tarraga A.-M."/>
            <person name="Challis G.L."/>
            <person name="Thomson N.R."/>
            <person name="James K.D."/>
            <person name="Harris D.E."/>
            <person name="Quail M.A."/>
            <person name="Kieser H."/>
            <person name="Harper D."/>
            <person name="Bateman A."/>
            <person name="Brown S."/>
            <person name="Chandra G."/>
            <person name="Chen C.W."/>
            <person name="Collins M."/>
            <person name="Cronin A."/>
            <person name="Fraser A."/>
            <person name="Goble A."/>
            <person name="Hidalgo J."/>
            <person name="Hornsby T."/>
            <person name="Howarth S."/>
            <person name="Huang C.-H."/>
            <person name="Kieser T."/>
            <person name="Larke L."/>
            <person name="Murphy L.D."/>
            <person name="Oliver K."/>
            <person name="O'Neil S."/>
            <person name="Rabbinowitsch E."/>
            <person name="Rajandream M.A."/>
            <person name="Rutherford K.M."/>
            <person name="Rutter S."/>
            <person name="Seeger K."/>
            <person name="Saunders D."/>
            <person name="Sharp S."/>
            <person name="Squares R."/>
            <person name="Squares S."/>
            <person name="Taylor K."/>
            <person name="Warren T."/>
            <person name="Wietzorrek A."/>
            <person name="Woodward J.R."/>
            <person name="Barrell B.G."/>
            <person name="Parkhill J."/>
            <person name="Hopwood D.A."/>
        </authorList>
    </citation>
    <scope>NUCLEOTIDE SEQUENCE [LARGE SCALE GENOMIC DNA]</scope>
    <source>
        <strain>ATCC BAA-471 / A3(2) / M145</strain>
    </source>
</reference>
<reference key="3">
    <citation type="journal article" date="2001" name="J. Bacteriol.">
        <title>Beta-ketoacyl acyl carrier protein synthase III (FabH) is essential for fatty acid biosynthesis in Streptomyces coelicolor A3(2).</title>
        <authorList>
            <person name="Revill W.P."/>
            <person name="Bibb M.J."/>
            <person name="Scheu A.-K."/>
            <person name="Kieser H.J."/>
            <person name="Hopwood D.A."/>
        </authorList>
    </citation>
    <scope>FUNCTION</scope>
</reference>
<organism>
    <name type="scientific">Streptomyces coelicolor (strain ATCC BAA-471 / A3(2) / M145)</name>
    <dbReference type="NCBI Taxonomy" id="100226"/>
    <lineage>
        <taxon>Bacteria</taxon>
        <taxon>Bacillati</taxon>
        <taxon>Actinomycetota</taxon>
        <taxon>Actinomycetes</taxon>
        <taxon>Kitasatosporales</taxon>
        <taxon>Streptomycetaceae</taxon>
        <taxon>Streptomyces</taxon>
        <taxon>Streptomyces albidoflavus group</taxon>
    </lineage>
</organism>